<evidence type="ECO:0000255" key="1">
    <source>
        <dbReference type="HAMAP-Rule" id="MF_00454"/>
    </source>
</evidence>
<name>FLUC_SERP5</name>
<accession>A8GB06</accession>
<comment type="function">
    <text evidence="1">Fluoride-specific ion channel. Important for reducing fluoride concentration in the cell, thus reducing its toxicity.</text>
</comment>
<comment type="catalytic activity">
    <reaction evidence="1">
        <text>fluoride(in) = fluoride(out)</text>
        <dbReference type="Rhea" id="RHEA:76159"/>
        <dbReference type="ChEBI" id="CHEBI:17051"/>
    </reaction>
    <physiologicalReaction direction="left-to-right" evidence="1">
        <dbReference type="Rhea" id="RHEA:76160"/>
    </physiologicalReaction>
</comment>
<comment type="activity regulation">
    <text evidence="1">Na(+) is not transported, but it plays an essential structural role and its presence is essential for fluoride channel function.</text>
</comment>
<comment type="subcellular location">
    <subcellularLocation>
        <location evidence="1">Cell inner membrane</location>
        <topology evidence="1">Multi-pass membrane protein</topology>
    </subcellularLocation>
</comment>
<comment type="similarity">
    <text evidence="1">Belongs to the fluoride channel Fluc/FEX (TC 1.A.43) family.</text>
</comment>
<feature type="chain" id="PRO_1000060317" description="Fluoride-specific ion channel FluC">
    <location>
        <begin position="1"/>
        <end position="127"/>
    </location>
</feature>
<feature type="transmembrane region" description="Helical" evidence="1">
    <location>
        <begin position="2"/>
        <end position="22"/>
    </location>
</feature>
<feature type="transmembrane region" description="Helical" evidence="1">
    <location>
        <begin position="35"/>
        <end position="55"/>
    </location>
</feature>
<feature type="transmembrane region" description="Helical" evidence="1">
    <location>
        <begin position="68"/>
        <end position="88"/>
    </location>
</feature>
<feature type="transmembrane region" description="Helical" evidence="1">
    <location>
        <begin position="104"/>
        <end position="124"/>
    </location>
</feature>
<feature type="binding site" evidence="1">
    <location>
        <position position="75"/>
    </location>
    <ligand>
        <name>Na(+)</name>
        <dbReference type="ChEBI" id="CHEBI:29101"/>
        <note>structural</note>
    </ligand>
</feature>
<feature type="binding site" evidence="1">
    <location>
        <position position="78"/>
    </location>
    <ligand>
        <name>Na(+)</name>
        <dbReference type="ChEBI" id="CHEBI:29101"/>
        <note>structural</note>
    </ligand>
</feature>
<reference key="1">
    <citation type="submission" date="2007-09" db="EMBL/GenBank/DDBJ databases">
        <title>Complete sequence of chromosome of Serratia proteamaculans 568.</title>
        <authorList>
            <consortium name="US DOE Joint Genome Institute"/>
            <person name="Copeland A."/>
            <person name="Lucas S."/>
            <person name="Lapidus A."/>
            <person name="Barry K."/>
            <person name="Glavina del Rio T."/>
            <person name="Dalin E."/>
            <person name="Tice H."/>
            <person name="Pitluck S."/>
            <person name="Chain P."/>
            <person name="Malfatti S."/>
            <person name="Shin M."/>
            <person name="Vergez L."/>
            <person name="Schmutz J."/>
            <person name="Larimer F."/>
            <person name="Land M."/>
            <person name="Hauser L."/>
            <person name="Kyrpides N."/>
            <person name="Kim E."/>
            <person name="Taghavi S."/>
            <person name="Newman L."/>
            <person name="Vangronsveld J."/>
            <person name="van der Lelie D."/>
            <person name="Richardson P."/>
        </authorList>
    </citation>
    <scope>NUCLEOTIDE SEQUENCE [LARGE SCALE GENOMIC DNA]</scope>
    <source>
        <strain>568</strain>
    </source>
</reference>
<proteinExistence type="inferred from homology"/>
<sequence length="127" mass="13717">MLSSLLAVFIGGGMGSVLRWAISMKMNPLNAHIPLGTLAVNLLGGFIIGLAIAIFSRLTHLDPTWKLLITTGFCGGLTTFSTFSLEVVYLLQDGRFMWALANMLLNLAGSLVMTLLAFMLVVWINGQ</sequence>
<protein>
    <recommendedName>
        <fullName evidence="1">Fluoride-specific ion channel FluC</fullName>
    </recommendedName>
</protein>
<gene>
    <name evidence="1" type="primary">fluC</name>
    <name evidence="1" type="synonym">crcB</name>
    <name type="ordered locus">Spro_1192</name>
</gene>
<organism>
    <name type="scientific">Serratia proteamaculans (strain 568)</name>
    <dbReference type="NCBI Taxonomy" id="399741"/>
    <lineage>
        <taxon>Bacteria</taxon>
        <taxon>Pseudomonadati</taxon>
        <taxon>Pseudomonadota</taxon>
        <taxon>Gammaproteobacteria</taxon>
        <taxon>Enterobacterales</taxon>
        <taxon>Yersiniaceae</taxon>
        <taxon>Serratia</taxon>
    </lineage>
</organism>
<dbReference type="EMBL" id="CP000826">
    <property type="protein sequence ID" value="ABV40296.1"/>
    <property type="molecule type" value="Genomic_DNA"/>
</dbReference>
<dbReference type="SMR" id="A8GB06"/>
<dbReference type="STRING" id="399741.Spro_1192"/>
<dbReference type="KEGG" id="spe:Spro_1192"/>
<dbReference type="eggNOG" id="COG0239">
    <property type="taxonomic scope" value="Bacteria"/>
</dbReference>
<dbReference type="HOGENOM" id="CLU_114342_3_3_6"/>
<dbReference type="OrthoDB" id="9806299at2"/>
<dbReference type="GO" id="GO:0005886">
    <property type="term" value="C:plasma membrane"/>
    <property type="evidence" value="ECO:0007669"/>
    <property type="project" value="UniProtKB-SubCell"/>
</dbReference>
<dbReference type="GO" id="GO:0062054">
    <property type="term" value="F:fluoride channel activity"/>
    <property type="evidence" value="ECO:0007669"/>
    <property type="project" value="UniProtKB-UniRule"/>
</dbReference>
<dbReference type="GO" id="GO:0046872">
    <property type="term" value="F:metal ion binding"/>
    <property type="evidence" value="ECO:0007669"/>
    <property type="project" value="UniProtKB-KW"/>
</dbReference>
<dbReference type="GO" id="GO:0140114">
    <property type="term" value="P:cellular detoxification of fluoride"/>
    <property type="evidence" value="ECO:0007669"/>
    <property type="project" value="UniProtKB-UniRule"/>
</dbReference>
<dbReference type="HAMAP" id="MF_00454">
    <property type="entry name" value="FluC"/>
    <property type="match status" value="1"/>
</dbReference>
<dbReference type="InterPro" id="IPR003691">
    <property type="entry name" value="FluC"/>
</dbReference>
<dbReference type="NCBIfam" id="TIGR00494">
    <property type="entry name" value="crcB"/>
    <property type="match status" value="1"/>
</dbReference>
<dbReference type="NCBIfam" id="NF010792">
    <property type="entry name" value="PRK14196.1"/>
    <property type="match status" value="1"/>
</dbReference>
<dbReference type="PANTHER" id="PTHR28259">
    <property type="entry name" value="FLUORIDE EXPORT PROTEIN 1-RELATED"/>
    <property type="match status" value="1"/>
</dbReference>
<dbReference type="PANTHER" id="PTHR28259:SF1">
    <property type="entry name" value="FLUORIDE EXPORT PROTEIN 1-RELATED"/>
    <property type="match status" value="1"/>
</dbReference>
<dbReference type="Pfam" id="PF02537">
    <property type="entry name" value="CRCB"/>
    <property type="match status" value="1"/>
</dbReference>
<keyword id="KW-0997">Cell inner membrane</keyword>
<keyword id="KW-1003">Cell membrane</keyword>
<keyword id="KW-0407">Ion channel</keyword>
<keyword id="KW-0406">Ion transport</keyword>
<keyword id="KW-0472">Membrane</keyword>
<keyword id="KW-0479">Metal-binding</keyword>
<keyword id="KW-0915">Sodium</keyword>
<keyword id="KW-0812">Transmembrane</keyword>
<keyword id="KW-1133">Transmembrane helix</keyword>
<keyword id="KW-0813">Transport</keyword>